<evidence type="ECO:0000255" key="1">
    <source>
        <dbReference type="HAMAP-Rule" id="MF_01353"/>
    </source>
</evidence>
<reference key="1">
    <citation type="journal article" date="2007" name="ISME J.">
        <title>Population level functional diversity in a microbial community revealed by comparative genomic and metagenomic analyses.</title>
        <authorList>
            <person name="Bhaya D."/>
            <person name="Grossman A.R."/>
            <person name="Steunou A.-S."/>
            <person name="Khuri N."/>
            <person name="Cohan F.M."/>
            <person name="Hamamura N."/>
            <person name="Melendrez M.C."/>
            <person name="Bateson M.M."/>
            <person name="Ward D.M."/>
            <person name="Heidelberg J.F."/>
        </authorList>
    </citation>
    <scope>NUCLEOTIDE SEQUENCE [LARGE SCALE GENOMIC DNA]</scope>
    <source>
        <strain>JA-3-3Ab</strain>
    </source>
</reference>
<comment type="function">
    <text evidence="1">NDH-1 shuttles electrons from an unknown electron donor, via FMN and iron-sulfur (Fe-S) centers, to quinones in the respiratory and/or the photosynthetic chain. The immediate electron acceptor for the enzyme in this species is believed to be plastoquinone. Couples the redox reaction to proton translocation, and thus conserves the redox energy in a proton gradient. Cyanobacterial NDH-1 also plays a role in inorganic carbon-concentration.</text>
</comment>
<comment type="catalytic activity">
    <reaction evidence="1">
        <text>a plastoquinone + NADH + (n+1) H(+)(in) = a plastoquinol + NAD(+) + n H(+)(out)</text>
        <dbReference type="Rhea" id="RHEA:42608"/>
        <dbReference type="Rhea" id="RHEA-COMP:9561"/>
        <dbReference type="Rhea" id="RHEA-COMP:9562"/>
        <dbReference type="ChEBI" id="CHEBI:15378"/>
        <dbReference type="ChEBI" id="CHEBI:17757"/>
        <dbReference type="ChEBI" id="CHEBI:57540"/>
        <dbReference type="ChEBI" id="CHEBI:57945"/>
        <dbReference type="ChEBI" id="CHEBI:62192"/>
    </reaction>
</comment>
<comment type="catalytic activity">
    <reaction evidence="1">
        <text>a plastoquinone + NADPH + (n+1) H(+)(in) = a plastoquinol + NADP(+) + n H(+)(out)</text>
        <dbReference type="Rhea" id="RHEA:42612"/>
        <dbReference type="Rhea" id="RHEA-COMP:9561"/>
        <dbReference type="Rhea" id="RHEA-COMP:9562"/>
        <dbReference type="ChEBI" id="CHEBI:15378"/>
        <dbReference type="ChEBI" id="CHEBI:17757"/>
        <dbReference type="ChEBI" id="CHEBI:57783"/>
        <dbReference type="ChEBI" id="CHEBI:58349"/>
        <dbReference type="ChEBI" id="CHEBI:62192"/>
    </reaction>
</comment>
<comment type="subunit">
    <text evidence="1">NDH-1 can be composed of about 15 different subunits; different subcomplexes with different compositions have been identified which probably have different functions.</text>
</comment>
<comment type="subcellular location">
    <subcellularLocation>
        <location evidence="1">Cellular thylakoid membrane</location>
        <topology evidence="1">Peripheral membrane protein</topology>
        <orientation evidence="1">Cytoplasmic side</orientation>
    </subcellularLocation>
</comment>
<comment type="similarity">
    <text evidence="1">Belongs to the complex I NdhN subunit family.</text>
</comment>
<gene>
    <name evidence="1" type="primary">ndhN</name>
    <name type="ordered locus">CYA_1028</name>
</gene>
<dbReference type="EC" id="7.1.1.-" evidence="1"/>
<dbReference type="EMBL" id="CP000239">
    <property type="protein sequence ID" value="ABC99224.1"/>
    <property type="molecule type" value="Genomic_DNA"/>
</dbReference>
<dbReference type="RefSeq" id="WP_011429907.1">
    <property type="nucleotide sequence ID" value="NC_007775.1"/>
</dbReference>
<dbReference type="SMR" id="Q2JVL1"/>
<dbReference type="STRING" id="321327.CYA_1028"/>
<dbReference type="KEGG" id="cya:CYA_1028"/>
<dbReference type="eggNOG" id="ENOG502ZBMI">
    <property type="taxonomic scope" value="Bacteria"/>
</dbReference>
<dbReference type="HOGENOM" id="CLU_087432_0_0_3"/>
<dbReference type="OrthoDB" id="510798at2"/>
<dbReference type="Proteomes" id="UP000008818">
    <property type="component" value="Chromosome"/>
</dbReference>
<dbReference type="GO" id="GO:0031676">
    <property type="term" value="C:plasma membrane-derived thylakoid membrane"/>
    <property type="evidence" value="ECO:0007669"/>
    <property type="project" value="UniProtKB-SubCell"/>
</dbReference>
<dbReference type="GO" id="GO:0016655">
    <property type="term" value="F:oxidoreductase activity, acting on NAD(P)H, quinone or similar compound as acceptor"/>
    <property type="evidence" value="ECO:0007669"/>
    <property type="project" value="UniProtKB-UniRule"/>
</dbReference>
<dbReference type="GO" id="GO:0048038">
    <property type="term" value="F:quinone binding"/>
    <property type="evidence" value="ECO:0007669"/>
    <property type="project" value="UniProtKB-KW"/>
</dbReference>
<dbReference type="HAMAP" id="MF_01353">
    <property type="entry name" value="NDH1_NDH1N"/>
    <property type="match status" value="1"/>
</dbReference>
<dbReference type="InterPro" id="IPR020874">
    <property type="entry name" value="NAD(P)H-quinone_OxRdtase_su_N"/>
</dbReference>
<dbReference type="PANTHER" id="PTHR35515">
    <property type="entry name" value="NAD(P)H-QUINONE OXIDOREDUCTASE SUBUNIT N, CHLOROPLASTIC"/>
    <property type="match status" value="1"/>
</dbReference>
<dbReference type="PANTHER" id="PTHR35515:SF1">
    <property type="entry name" value="NAD(P)H-QUINONE OXIDOREDUCTASE SUBUNIT N, CHLOROPLASTIC"/>
    <property type="match status" value="1"/>
</dbReference>
<dbReference type="Pfam" id="PF11909">
    <property type="entry name" value="NdhN"/>
    <property type="match status" value="1"/>
</dbReference>
<feature type="chain" id="PRO_0000352239" description="NAD(P)H-quinone oxidoreductase subunit N">
    <location>
        <begin position="1"/>
        <end position="147"/>
    </location>
</feature>
<proteinExistence type="inferred from homology"/>
<accession>Q2JVL1</accession>
<keyword id="KW-0472">Membrane</keyword>
<keyword id="KW-0520">NAD</keyword>
<keyword id="KW-0521">NADP</keyword>
<keyword id="KW-0618">Plastoquinone</keyword>
<keyword id="KW-0874">Quinone</keyword>
<keyword id="KW-0793">Thylakoid</keyword>
<keyword id="KW-1278">Translocase</keyword>
<keyword id="KW-0813">Transport</keyword>
<organism>
    <name type="scientific">Synechococcus sp. (strain JA-3-3Ab)</name>
    <name type="common">Cyanobacteria bacterium Yellowstone A-Prime</name>
    <dbReference type="NCBI Taxonomy" id="321327"/>
    <lineage>
        <taxon>Bacteria</taxon>
        <taxon>Bacillati</taxon>
        <taxon>Cyanobacteriota</taxon>
        <taxon>Cyanophyceae</taxon>
        <taxon>Synechococcales</taxon>
        <taxon>Synechococcaceae</taxon>
        <taxon>Synechococcus</taxon>
    </lineage>
</organism>
<sequence>MLLVGSGAKFVQQLEQCGALAIFVTPEGGSEGHYLRRLRGAGYEVVTLSSKGIGDLASYLTSSHGVRPATLGKSQRRTYFYPSLIEQYRATLPPKAKGLVFWFYEGHVLSRQELSYLVKLSQEDKGVKFVVELGRERSIRWQPLQSA</sequence>
<name>NDHN_SYNJA</name>
<protein>
    <recommendedName>
        <fullName evidence="1">NAD(P)H-quinone oxidoreductase subunit N</fullName>
        <ecNumber evidence="1">7.1.1.-</ecNumber>
    </recommendedName>
    <alternativeName>
        <fullName evidence="1">NAD(P)H dehydrogenase I subunit N</fullName>
        <shortName evidence="1">NDH-1 subunit N</shortName>
        <shortName evidence="1">NDH-N</shortName>
    </alternativeName>
</protein>